<dbReference type="EC" id="2.7.4.9" evidence="1"/>
<dbReference type="EMBL" id="CT978603">
    <property type="protein sequence ID" value="CAK27157.1"/>
    <property type="molecule type" value="Genomic_DNA"/>
</dbReference>
<dbReference type="SMR" id="A5GQJ8"/>
<dbReference type="STRING" id="316278.SynRCC307_0254"/>
<dbReference type="KEGG" id="syr:SynRCC307_0254"/>
<dbReference type="eggNOG" id="COG0125">
    <property type="taxonomic scope" value="Bacteria"/>
</dbReference>
<dbReference type="HOGENOM" id="CLU_049131_0_1_3"/>
<dbReference type="OrthoDB" id="9774907at2"/>
<dbReference type="Proteomes" id="UP000001115">
    <property type="component" value="Chromosome"/>
</dbReference>
<dbReference type="GO" id="GO:0005829">
    <property type="term" value="C:cytosol"/>
    <property type="evidence" value="ECO:0007669"/>
    <property type="project" value="TreeGrafter"/>
</dbReference>
<dbReference type="GO" id="GO:0005524">
    <property type="term" value="F:ATP binding"/>
    <property type="evidence" value="ECO:0007669"/>
    <property type="project" value="UniProtKB-UniRule"/>
</dbReference>
<dbReference type="GO" id="GO:0004798">
    <property type="term" value="F:dTMP kinase activity"/>
    <property type="evidence" value="ECO:0007669"/>
    <property type="project" value="UniProtKB-UniRule"/>
</dbReference>
<dbReference type="GO" id="GO:0006233">
    <property type="term" value="P:dTDP biosynthetic process"/>
    <property type="evidence" value="ECO:0007669"/>
    <property type="project" value="InterPro"/>
</dbReference>
<dbReference type="GO" id="GO:0006235">
    <property type="term" value="P:dTTP biosynthetic process"/>
    <property type="evidence" value="ECO:0007669"/>
    <property type="project" value="UniProtKB-UniRule"/>
</dbReference>
<dbReference type="GO" id="GO:0006227">
    <property type="term" value="P:dUDP biosynthetic process"/>
    <property type="evidence" value="ECO:0007669"/>
    <property type="project" value="TreeGrafter"/>
</dbReference>
<dbReference type="CDD" id="cd01672">
    <property type="entry name" value="TMPK"/>
    <property type="match status" value="1"/>
</dbReference>
<dbReference type="FunFam" id="3.40.50.300:FF:000225">
    <property type="entry name" value="Thymidylate kinase"/>
    <property type="match status" value="1"/>
</dbReference>
<dbReference type="Gene3D" id="3.40.50.300">
    <property type="entry name" value="P-loop containing nucleotide triphosphate hydrolases"/>
    <property type="match status" value="1"/>
</dbReference>
<dbReference type="HAMAP" id="MF_00165">
    <property type="entry name" value="Thymidylate_kinase"/>
    <property type="match status" value="1"/>
</dbReference>
<dbReference type="InterPro" id="IPR027417">
    <property type="entry name" value="P-loop_NTPase"/>
</dbReference>
<dbReference type="InterPro" id="IPR039430">
    <property type="entry name" value="Thymidylate_kin-like_dom"/>
</dbReference>
<dbReference type="InterPro" id="IPR018095">
    <property type="entry name" value="Thymidylate_kin_CS"/>
</dbReference>
<dbReference type="InterPro" id="IPR018094">
    <property type="entry name" value="Thymidylate_kinase"/>
</dbReference>
<dbReference type="NCBIfam" id="TIGR00041">
    <property type="entry name" value="DTMP_kinase"/>
    <property type="match status" value="1"/>
</dbReference>
<dbReference type="PANTHER" id="PTHR10344">
    <property type="entry name" value="THYMIDYLATE KINASE"/>
    <property type="match status" value="1"/>
</dbReference>
<dbReference type="PANTHER" id="PTHR10344:SF4">
    <property type="entry name" value="UMP-CMP KINASE 2, MITOCHONDRIAL"/>
    <property type="match status" value="1"/>
</dbReference>
<dbReference type="Pfam" id="PF02223">
    <property type="entry name" value="Thymidylate_kin"/>
    <property type="match status" value="1"/>
</dbReference>
<dbReference type="SUPFAM" id="SSF52540">
    <property type="entry name" value="P-loop containing nucleoside triphosphate hydrolases"/>
    <property type="match status" value="1"/>
</dbReference>
<dbReference type="PROSITE" id="PS01331">
    <property type="entry name" value="THYMIDYLATE_KINASE"/>
    <property type="match status" value="1"/>
</dbReference>
<organism>
    <name type="scientific">Synechococcus sp. (strain RCC307)</name>
    <dbReference type="NCBI Taxonomy" id="316278"/>
    <lineage>
        <taxon>Bacteria</taxon>
        <taxon>Bacillati</taxon>
        <taxon>Cyanobacteriota</taxon>
        <taxon>Cyanophyceae</taxon>
        <taxon>Synechococcales</taxon>
        <taxon>Synechococcaceae</taxon>
        <taxon>Synechococcus</taxon>
    </lineage>
</organism>
<keyword id="KW-0067">ATP-binding</keyword>
<keyword id="KW-0418">Kinase</keyword>
<keyword id="KW-0545">Nucleotide biosynthesis</keyword>
<keyword id="KW-0547">Nucleotide-binding</keyword>
<keyword id="KW-1185">Reference proteome</keyword>
<keyword id="KW-0808">Transferase</keyword>
<comment type="function">
    <text evidence="1">Phosphorylation of dTMP to form dTDP in both de novo and salvage pathways of dTTP synthesis.</text>
</comment>
<comment type="catalytic activity">
    <reaction evidence="1">
        <text>dTMP + ATP = dTDP + ADP</text>
        <dbReference type="Rhea" id="RHEA:13517"/>
        <dbReference type="ChEBI" id="CHEBI:30616"/>
        <dbReference type="ChEBI" id="CHEBI:58369"/>
        <dbReference type="ChEBI" id="CHEBI:63528"/>
        <dbReference type="ChEBI" id="CHEBI:456216"/>
        <dbReference type="EC" id="2.7.4.9"/>
    </reaction>
</comment>
<comment type="similarity">
    <text evidence="1">Belongs to the thymidylate kinase family.</text>
</comment>
<reference key="1">
    <citation type="submission" date="2006-05" db="EMBL/GenBank/DDBJ databases">
        <authorList>
            <consortium name="Genoscope"/>
        </authorList>
    </citation>
    <scope>NUCLEOTIDE SEQUENCE [LARGE SCALE GENOMIC DNA]</scope>
    <source>
        <strain>RCC307</strain>
    </source>
</reference>
<sequence>MRGRFLVLEGIDGCGKTTQLKALADWLPASGLMPSGAQLITTREPGGTALGQALRQLLLHPPEEQAPATRAELLLYAADRAQHVQTRLEPALAAGDWVLSDRYCGSTAAYQGYGRGLDLDLITQLEQLATAGLQPDLCLWLELSPELAAQRRSGQQQDRIEAEGLAFLARVHQGFAELSQRPLWRRVDASLPPEQVHQQVQHLVREGLELAL</sequence>
<protein>
    <recommendedName>
        <fullName evidence="1">Thymidylate kinase</fullName>
        <ecNumber evidence="1">2.7.4.9</ecNumber>
    </recommendedName>
    <alternativeName>
        <fullName evidence="1">dTMP kinase</fullName>
    </alternativeName>
</protein>
<proteinExistence type="inferred from homology"/>
<gene>
    <name evidence="1" type="primary">tmk</name>
    <name type="ordered locus">SynRCC307_0254</name>
</gene>
<name>KTHY_SYNR3</name>
<accession>A5GQJ8</accession>
<evidence type="ECO:0000255" key="1">
    <source>
        <dbReference type="HAMAP-Rule" id="MF_00165"/>
    </source>
</evidence>
<feature type="chain" id="PRO_1000023301" description="Thymidylate kinase">
    <location>
        <begin position="1"/>
        <end position="212"/>
    </location>
</feature>
<feature type="binding site" evidence="1">
    <location>
        <begin position="10"/>
        <end position="17"/>
    </location>
    <ligand>
        <name>ATP</name>
        <dbReference type="ChEBI" id="CHEBI:30616"/>
    </ligand>
</feature>